<protein>
    <recommendedName>
        <fullName>Probable molybdenum ABC transporter permease protein HVO_B0370</fullName>
    </recommendedName>
</protein>
<evidence type="ECO:0000255" key="1">
    <source>
        <dbReference type="PROSITE-ProRule" id="PRU00441"/>
    </source>
</evidence>
<evidence type="ECO:0000269" key="2">
    <source>
    </source>
</evidence>
<evidence type="ECO:0000305" key="3"/>
<reference key="1">
    <citation type="journal article" date="1999" name="Genetics">
        <title>Genetic identification of three ABC transporters as essential elements for nitrate respiration in Haloferax volcanii.</title>
        <authorList>
            <person name="Wanner C."/>
            <person name="Soppa J."/>
        </authorList>
    </citation>
    <scope>NUCLEOTIDE SEQUENCE [GENOMIC DNA]</scope>
    <scope>FUNCTION</scope>
    <scope>DISRUPTION PHENOTYPE</scope>
    <source>
        <strain>DS2 / WR 340</strain>
    </source>
</reference>
<reference key="2">
    <citation type="journal article" date="2010" name="PLoS ONE">
        <title>The complete genome sequence of Haloferax volcanii DS2, a model archaeon.</title>
        <authorList>
            <person name="Hartman A.L."/>
            <person name="Norais C."/>
            <person name="Badger J.H."/>
            <person name="Delmas S."/>
            <person name="Haldenby S."/>
            <person name="Madupu R."/>
            <person name="Robinson J."/>
            <person name="Khouri H."/>
            <person name="Ren Q."/>
            <person name="Lowe T.M."/>
            <person name="Maupin-Furlow J."/>
            <person name="Pohlschroder M."/>
            <person name="Daniels C."/>
            <person name="Pfeiffer F."/>
            <person name="Allers T."/>
            <person name="Eisen J.A."/>
        </authorList>
    </citation>
    <scope>NUCLEOTIDE SEQUENCE [LARGE SCALE GENOMIC DNA]</scope>
    <source>
        <strain>ATCC 29605 / DSM 3757 / JCM 8879 / NBRC 14742 / NCIMB 2012 / VKM B-1768 / DS2</strain>
        <plasmid>pHV3</plasmid>
    </source>
</reference>
<feature type="chain" id="PRO_0000421000" description="Probable molybdenum ABC transporter permease protein HVO_B0370">
    <location>
        <begin position="1"/>
        <end position="269"/>
    </location>
</feature>
<feature type="transmembrane region" description="Helical" evidence="1">
    <location>
        <begin position="26"/>
        <end position="46"/>
    </location>
</feature>
<feature type="transmembrane region" description="Helical" evidence="1">
    <location>
        <begin position="69"/>
        <end position="89"/>
    </location>
</feature>
<feature type="transmembrane region" description="Helical" evidence="1">
    <location>
        <begin position="100"/>
        <end position="120"/>
    </location>
</feature>
<feature type="transmembrane region" description="Helical" evidence="1">
    <location>
        <begin position="140"/>
        <end position="160"/>
    </location>
</feature>
<feature type="transmembrane region" description="Helical" evidence="1">
    <location>
        <begin position="198"/>
        <end position="218"/>
    </location>
</feature>
<feature type="transmembrane region" description="Helical" evidence="1">
    <location>
        <begin position="243"/>
        <end position="263"/>
    </location>
</feature>
<feature type="domain" description="ABC transmembrane type-1" evidence="1">
    <location>
        <begin position="65"/>
        <end position="258"/>
    </location>
</feature>
<proteinExistence type="inferred from homology"/>
<keyword id="KW-1003">Cell membrane</keyword>
<keyword id="KW-0472">Membrane</keyword>
<keyword id="KW-0500">Molybdenum</keyword>
<keyword id="KW-0614">Plasmid</keyword>
<keyword id="KW-1185">Reference proteome</keyword>
<keyword id="KW-0812">Transmembrane</keyword>
<keyword id="KW-1133">Transmembrane helix</keyword>
<keyword id="KW-0813">Transport</keyword>
<geneLocation type="plasmid">
    <name>pHV3</name>
</geneLocation>
<accession>D4GQ17</accession>
<accession>Q9V307</accession>
<sequence>MSHRQPNRRERGVTRLLPETWRGLTLLLAGVLLLYYLLPIGALVFAQSPASLATDVTNEVVLTAATNSVVAATLSTLVAVAFGVPLAYWLSRTSFRGRDVILALVMLPLVLPPVVSGMLLLRLVGPAGLGQLTSVPLTRSLFGVVLAQTYVASPFLVVTAKTAFDGVDRQLEAAARSLGEDRVGSVRRVTLPLAKQGILAGVTLTFARAIGEFGATLMLAYYPRTLPVQIWVSYLSTGLDAAFPVALVLVGIAVGAILLVHALGTNPWE</sequence>
<organism>
    <name type="scientific">Haloferax volcanii (strain ATCC 29605 / DSM 3757 / JCM 8879 / NBRC 14742 / NCIMB 2012 / VKM B-1768 / DS2)</name>
    <name type="common">Halobacterium volcanii</name>
    <dbReference type="NCBI Taxonomy" id="309800"/>
    <lineage>
        <taxon>Archaea</taxon>
        <taxon>Methanobacteriati</taxon>
        <taxon>Methanobacteriota</taxon>
        <taxon>Stenosarchaea group</taxon>
        <taxon>Halobacteria</taxon>
        <taxon>Halobacteriales</taxon>
        <taxon>Haloferacaceae</taxon>
        <taxon>Haloferax</taxon>
    </lineage>
</organism>
<comment type="function">
    <text evidence="2 3">Part of an ABC transporter complex involved in molybdenum import (Probable). Responsible for the translocation of the substrate across the membrane.</text>
</comment>
<comment type="subunit">
    <text evidence="3">The complex is composed of two ATP-binding proteins, two transmembrane proteins (HVO_B0370) and a solute-binding protein (HVO_B0369).</text>
</comment>
<comment type="subcellular location">
    <subcellularLocation>
        <location evidence="3">Cell membrane</location>
        <topology evidence="1">Multi-pass membrane protein</topology>
    </subcellularLocation>
</comment>
<comment type="disruption phenotype">
    <text evidence="2">Mutation causes nitrate respiration deficiency.</text>
</comment>
<comment type="similarity">
    <text evidence="3">Belongs to the binding-protein-dependent transport system permease family.</text>
</comment>
<gene>
    <name type="ordered locus">HVO_B0370</name>
</gene>
<name>MOBDP_HALVD</name>
<dbReference type="EMBL" id="AJ238878">
    <property type="protein sequence ID" value="CAB42543.1"/>
    <property type="molecule type" value="Genomic_DNA"/>
</dbReference>
<dbReference type="EMBL" id="CP001953">
    <property type="protein sequence ID" value="ADE01262.1"/>
    <property type="molecule type" value="Genomic_DNA"/>
</dbReference>
<dbReference type="PIR" id="T45007">
    <property type="entry name" value="T45007"/>
</dbReference>
<dbReference type="RefSeq" id="WP_004041164.1">
    <property type="nucleotide sequence ID" value="NC_013964.1"/>
</dbReference>
<dbReference type="SMR" id="D4GQ17"/>
<dbReference type="PaxDb" id="309800-C498_01805"/>
<dbReference type="EnsemblBacteria" id="ADE01262">
    <property type="protein sequence ID" value="ADE01262"/>
    <property type="gene ID" value="HVO_B0370"/>
</dbReference>
<dbReference type="GeneID" id="8919037"/>
<dbReference type="KEGG" id="hvo:HVO_B0370"/>
<dbReference type="eggNOG" id="arCOG00164">
    <property type="taxonomic scope" value="Archaea"/>
</dbReference>
<dbReference type="HOGENOM" id="CLU_016047_14_1_2"/>
<dbReference type="OrthoDB" id="11163at2157"/>
<dbReference type="Proteomes" id="UP000008243">
    <property type="component" value="Plasmid pHV3"/>
</dbReference>
<dbReference type="GO" id="GO:0005886">
    <property type="term" value="C:plasma membrane"/>
    <property type="evidence" value="ECO:0007669"/>
    <property type="project" value="UniProtKB-SubCell"/>
</dbReference>
<dbReference type="GO" id="GO:0055085">
    <property type="term" value="P:transmembrane transport"/>
    <property type="evidence" value="ECO:0007669"/>
    <property type="project" value="InterPro"/>
</dbReference>
<dbReference type="CDD" id="cd06261">
    <property type="entry name" value="TM_PBP2"/>
    <property type="match status" value="1"/>
</dbReference>
<dbReference type="Gene3D" id="1.10.3720.10">
    <property type="entry name" value="MetI-like"/>
    <property type="match status" value="1"/>
</dbReference>
<dbReference type="InterPro" id="IPR000515">
    <property type="entry name" value="MetI-like"/>
</dbReference>
<dbReference type="InterPro" id="IPR035906">
    <property type="entry name" value="MetI-like_sf"/>
</dbReference>
<dbReference type="PANTHER" id="PTHR30183">
    <property type="entry name" value="MOLYBDENUM TRANSPORT SYSTEM PERMEASE PROTEIN MODB"/>
    <property type="match status" value="1"/>
</dbReference>
<dbReference type="PANTHER" id="PTHR30183:SF3">
    <property type="entry name" value="MOLYBDENUM TRANSPORT SYSTEM PERMEASE PROTEIN MODB"/>
    <property type="match status" value="1"/>
</dbReference>
<dbReference type="Pfam" id="PF00528">
    <property type="entry name" value="BPD_transp_1"/>
    <property type="match status" value="1"/>
</dbReference>
<dbReference type="SUPFAM" id="SSF161098">
    <property type="entry name" value="MetI-like"/>
    <property type="match status" value="1"/>
</dbReference>
<dbReference type="PROSITE" id="PS50928">
    <property type="entry name" value="ABC_TM1"/>
    <property type="match status" value="1"/>
</dbReference>